<gene>
    <name type="primary">met11</name>
    <name type="synonym">mthfr2</name>
    <name type="ORF">SPAC343.10</name>
</gene>
<proteinExistence type="evidence at transcript level"/>
<evidence type="ECO:0000250" key="1"/>
<evidence type="ECO:0000250" key="2">
    <source>
        <dbReference type="UniProtKB" id="P53128"/>
    </source>
</evidence>
<evidence type="ECO:0000269" key="3">
    <source>
    </source>
</evidence>
<evidence type="ECO:0000305" key="4"/>
<reference key="1">
    <citation type="journal article" date="2002" name="Yeast">
        <title>Two non-complementing genes encoding enzymatically active methylenetetrahydrofolate reductases control methionine requirement in fission yeast Schizosaccharomyces pombe.</title>
        <authorList>
            <person name="Naula N."/>
            <person name="Walther C."/>
            <person name="Baumann D."/>
            <person name="Schweingruber M.E."/>
        </authorList>
    </citation>
    <scope>NUCLEOTIDE SEQUENCE [GENOMIC DNA]</scope>
    <scope>FUNCTION</scope>
    <scope>DISRUPTION PHENOTYPE</scope>
</reference>
<reference key="2">
    <citation type="journal article" date="2002" name="Nature">
        <title>The genome sequence of Schizosaccharomyces pombe.</title>
        <authorList>
            <person name="Wood V."/>
            <person name="Gwilliam R."/>
            <person name="Rajandream M.A."/>
            <person name="Lyne M.H."/>
            <person name="Lyne R."/>
            <person name="Stewart A."/>
            <person name="Sgouros J.G."/>
            <person name="Peat N."/>
            <person name="Hayles J."/>
            <person name="Baker S.G."/>
            <person name="Basham D."/>
            <person name="Bowman S."/>
            <person name="Brooks K."/>
            <person name="Brown D."/>
            <person name="Brown S."/>
            <person name="Chillingworth T."/>
            <person name="Churcher C.M."/>
            <person name="Collins M."/>
            <person name="Connor R."/>
            <person name="Cronin A."/>
            <person name="Davis P."/>
            <person name="Feltwell T."/>
            <person name="Fraser A."/>
            <person name="Gentles S."/>
            <person name="Goble A."/>
            <person name="Hamlin N."/>
            <person name="Harris D.E."/>
            <person name="Hidalgo J."/>
            <person name="Hodgson G."/>
            <person name="Holroyd S."/>
            <person name="Hornsby T."/>
            <person name="Howarth S."/>
            <person name="Huckle E.J."/>
            <person name="Hunt S."/>
            <person name="Jagels K."/>
            <person name="James K.D."/>
            <person name="Jones L."/>
            <person name="Jones M."/>
            <person name="Leather S."/>
            <person name="McDonald S."/>
            <person name="McLean J."/>
            <person name="Mooney P."/>
            <person name="Moule S."/>
            <person name="Mungall K.L."/>
            <person name="Murphy L.D."/>
            <person name="Niblett D."/>
            <person name="Odell C."/>
            <person name="Oliver K."/>
            <person name="O'Neil S."/>
            <person name="Pearson D."/>
            <person name="Quail M.A."/>
            <person name="Rabbinowitsch E."/>
            <person name="Rutherford K.M."/>
            <person name="Rutter S."/>
            <person name="Saunders D."/>
            <person name="Seeger K."/>
            <person name="Sharp S."/>
            <person name="Skelton J."/>
            <person name="Simmonds M.N."/>
            <person name="Squares R."/>
            <person name="Squares S."/>
            <person name="Stevens K."/>
            <person name="Taylor K."/>
            <person name="Taylor R.G."/>
            <person name="Tivey A."/>
            <person name="Walsh S.V."/>
            <person name="Warren T."/>
            <person name="Whitehead S."/>
            <person name="Woodward J.R."/>
            <person name="Volckaert G."/>
            <person name="Aert R."/>
            <person name="Robben J."/>
            <person name="Grymonprez B."/>
            <person name="Weltjens I."/>
            <person name="Vanstreels E."/>
            <person name="Rieger M."/>
            <person name="Schaefer M."/>
            <person name="Mueller-Auer S."/>
            <person name="Gabel C."/>
            <person name="Fuchs M."/>
            <person name="Duesterhoeft A."/>
            <person name="Fritzc C."/>
            <person name="Holzer E."/>
            <person name="Moestl D."/>
            <person name="Hilbert H."/>
            <person name="Borzym K."/>
            <person name="Langer I."/>
            <person name="Beck A."/>
            <person name="Lehrach H."/>
            <person name="Reinhardt R."/>
            <person name="Pohl T.M."/>
            <person name="Eger P."/>
            <person name="Zimmermann W."/>
            <person name="Wedler H."/>
            <person name="Wambutt R."/>
            <person name="Purnelle B."/>
            <person name="Goffeau A."/>
            <person name="Cadieu E."/>
            <person name="Dreano S."/>
            <person name="Gloux S."/>
            <person name="Lelaure V."/>
            <person name="Mottier S."/>
            <person name="Galibert F."/>
            <person name="Aves S.J."/>
            <person name="Xiang Z."/>
            <person name="Hunt C."/>
            <person name="Moore K."/>
            <person name="Hurst S.M."/>
            <person name="Lucas M."/>
            <person name="Rochet M."/>
            <person name="Gaillardin C."/>
            <person name="Tallada V.A."/>
            <person name="Garzon A."/>
            <person name="Thode G."/>
            <person name="Daga R.R."/>
            <person name="Cruzado L."/>
            <person name="Jimenez J."/>
            <person name="Sanchez M."/>
            <person name="del Rey F."/>
            <person name="Benito J."/>
            <person name="Dominguez A."/>
            <person name="Revuelta J.L."/>
            <person name="Moreno S."/>
            <person name="Armstrong J."/>
            <person name="Forsburg S.L."/>
            <person name="Cerutti L."/>
            <person name="Lowe T."/>
            <person name="McCombie W.R."/>
            <person name="Paulsen I."/>
            <person name="Potashkin J."/>
            <person name="Shpakovski G.V."/>
            <person name="Ussery D."/>
            <person name="Barrell B.G."/>
            <person name="Nurse P."/>
        </authorList>
    </citation>
    <scope>NUCLEOTIDE SEQUENCE [LARGE SCALE GENOMIC DNA]</scope>
    <source>
        <strain>972 / ATCC 24843</strain>
    </source>
</reference>
<reference key="3">
    <citation type="journal article" date="1997" name="DNA Res.">
        <title>Identification of open reading frames in Schizosaccharomyces pombe cDNAs.</title>
        <authorList>
            <person name="Yoshioka S."/>
            <person name="Kato K."/>
            <person name="Nakai K."/>
            <person name="Okayama H."/>
            <person name="Nojima H."/>
        </authorList>
    </citation>
    <scope>NUCLEOTIDE SEQUENCE [LARGE SCALE MRNA] OF 11-641</scope>
    <source>
        <strain>PR745</strain>
    </source>
</reference>
<name>MTHR2_SCHPO</name>
<sequence length="641" mass="72140">MKIVDLIDKIPNGNAFYSFEYFPPKTTVGLENLSSRITRMSRNMMPLFSSVTWGTAGSTAEVSIYLAKMLEQHHKIPACLHLTCTNVDKAIIDKALETAKEYGIRNILALRGDPPLNSDHWEGKVSEFEHAVDLVRYIREKYGDYFCIGVAAYPEGHVDSNVPELSKDPLRDIPFLIEKVEAGADFIITQIFYEPEAFIKFENFVRNHSSNALRNIPIIPAIMPIQSYGSLKRMTRLCGCSVPSSLMQRLNAAKPDDEAIKNIGVEHIVDMIKKIMDNVQGRVHGFHFCTLNLERSVALILKNSGLLTKRWKQVESEMEDEKLLRTTRKRLSLDEPAELHNQVVVPSQQPVADKSSNLFVTSKQSSVSGHKDNLTEEAPFSVSEGSGVLGRQANWDDFTNGRFGDPRSPAYGEIDGYGPTLHFPPSEALKLWGYPVDESDITSLFQKHIMSDISAIPWIDEPVEVETKTIAKYLLKLNGNSWWTVGSQPAVNGAPSADPVFGWGPKGGRVFQKAFVECFVNGKDLKDFITKWHDNPQVTYYAGNNKSEFLTNAPKDGASAVTWGVYPGREIIQSTIIAEVSFKAWLSESFQVWGEWANLYSKNTPSRKLLENCINDRWLVTVIHHDFMDKNGLWKVLEIDF</sequence>
<accession>O74927</accession>
<accession>P78770</accession>
<accession>Q9UT80</accession>
<feature type="chain" id="PRO_0000190254" description="Methylenetetrahydrofolate reductase 2">
    <location>
        <begin position="1"/>
        <end position="641"/>
    </location>
</feature>
<feature type="active site" description="Proton donor/acceptor" evidence="1">
    <location>
        <position position="20"/>
    </location>
</feature>
<feature type="binding site" evidence="1">
    <location>
        <begin position="20"/>
        <end position="25"/>
    </location>
    <ligand>
        <name>NAD(+)</name>
        <dbReference type="ChEBI" id="CHEBI:57540"/>
    </ligand>
</feature>
<feature type="binding site" evidence="1">
    <location>
        <begin position="52"/>
        <end position="53"/>
    </location>
    <ligand>
        <name>FAD</name>
        <dbReference type="ChEBI" id="CHEBI:57692"/>
    </ligand>
</feature>
<feature type="binding site" evidence="1">
    <location>
        <begin position="52"/>
        <end position="53"/>
    </location>
    <ligand>
        <name>NAD(+)</name>
        <dbReference type="ChEBI" id="CHEBI:57540"/>
    </ligand>
</feature>
<feature type="binding site" evidence="1">
    <location>
        <position position="81"/>
    </location>
    <ligand>
        <name>FAD</name>
        <dbReference type="ChEBI" id="CHEBI:57692"/>
    </ligand>
</feature>
<feature type="binding site" evidence="1">
    <location>
        <begin position="111"/>
        <end position="113"/>
    </location>
    <ligand>
        <name>FAD</name>
        <dbReference type="ChEBI" id="CHEBI:57692"/>
    </ligand>
</feature>
<feature type="binding site" evidence="1">
    <location>
        <position position="113"/>
    </location>
    <ligand>
        <name>substrate</name>
    </ligand>
</feature>
<feature type="binding site" evidence="1">
    <location>
        <position position="153"/>
    </location>
    <ligand>
        <name>FAD</name>
        <dbReference type="ChEBI" id="CHEBI:57692"/>
    </ligand>
</feature>
<feature type="binding site" evidence="1">
    <location>
        <position position="172"/>
    </location>
    <ligand>
        <name>FAD</name>
        <dbReference type="ChEBI" id="CHEBI:57692"/>
    </ligand>
</feature>
<feature type="binding site" evidence="1">
    <location>
        <position position="179"/>
    </location>
    <ligand>
        <name>FAD</name>
        <dbReference type="ChEBI" id="CHEBI:57692"/>
    </ligand>
</feature>
<feature type="binding site" evidence="1">
    <location>
        <position position="190"/>
    </location>
    <ligand>
        <name>substrate</name>
    </ligand>
</feature>
<feature type="sequence conflict" description="In Ref. 3; BAA13780." evidence="4" ref="3">
    <original>E</original>
    <variation>D</variation>
    <location>
        <position position="202"/>
    </location>
</feature>
<feature type="sequence conflict" description="In Ref. 3; BAA13780." evidence="4" ref="3">
    <original>G</original>
    <variation>A</variation>
    <location>
        <position position="281"/>
    </location>
</feature>
<feature type="sequence conflict" description="In Ref. 3; BAA13780." evidence="4" ref="3">
    <original>A</original>
    <variation>V</variation>
    <location>
        <position position="455"/>
    </location>
</feature>
<feature type="sequence conflict" description="In Ref. 3; BAA13780." evidence="4" ref="3">
    <original>QVTYYAGNNKSEFLTNAPKDGASAVTWGVYPGREIIQSTIIAEVSFKAWLSESFQVWGEWANLYSKNTPSRKLLENCINDRWLVTVIHHDFMDKNGLWKVLEIDF</original>
    <variation>HVRSNFSSSISDSTCFQRLVSKPLFLRIRATDRSKFSVQK</variation>
    <location>
        <begin position="537"/>
        <end position="641"/>
    </location>
</feature>
<feature type="sequence conflict" description="In Ref. 1; CAA09738." evidence="4" ref="1">
    <original>I</original>
    <variation>L</variation>
    <location>
        <position position="614"/>
    </location>
</feature>
<comment type="function">
    <text evidence="3">Major methylenetetrahydrofolate reductase required to generate the methyl groups necessary for methionine synthetase to convert homocysteine to methionine. Performs 15 to 20 percent of the total methylenetetrahydrofolate reductase activity of the cells.</text>
</comment>
<comment type="catalytic activity">
    <reaction evidence="2">
        <text>(6S)-5-methyl-5,6,7,8-tetrahydrofolate + NADP(+) = (6R)-5,10-methylene-5,6,7,8-tetrahydrofolate + NADPH + H(+)</text>
        <dbReference type="Rhea" id="RHEA:19817"/>
        <dbReference type="ChEBI" id="CHEBI:15378"/>
        <dbReference type="ChEBI" id="CHEBI:15636"/>
        <dbReference type="ChEBI" id="CHEBI:18608"/>
        <dbReference type="ChEBI" id="CHEBI:57783"/>
        <dbReference type="ChEBI" id="CHEBI:58349"/>
        <dbReference type="EC" id="1.5.1.53"/>
    </reaction>
</comment>
<comment type="cofactor">
    <cofactor evidence="1">
        <name>FAD</name>
        <dbReference type="ChEBI" id="CHEBI:57692"/>
    </cofactor>
</comment>
<comment type="pathway">
    <text>One-carbon metabolism; tetrahydrofolate interconversion.</text>
</comment>
<comment type="disruption phenotype">
    <text evidence="3">Leads to partial auxotrophy for methionine.</text>
</comment>
<comment type="similarity">
    <text evidence="4">Belongs to the methylenetetrahydrofolate reductase family.</text>
</comment>
<organism>
    <name type="scientific">Schizosaccharomyces pombe (strain 972 / ATCC 24843)</name>
    <name type="common">Fission yeast</name>
    <dbReference type="NCBI Taxonomy" id="284812"/>
    <lineage>
        <taxon>Eukaryota</taxon>
        <taxon>Fungi</taxon>
        <taxon>Dikarya</taxon>
        <taxon>Ascomycota</taxon>
        <taxon>Taphrinomycotina</taxon>
        <taxon>Schizosaccharomycetes</taxon>
        <taxon>Schizosaccharomycetales</taxon>
        <taxon>Schizosaccharomycetaceae</taxon>
        <taxon>Schizosaccharomyces</taxon>
    </lineage>
</organism>
<keyword id="KW-0274">FAD</keyword>
<keyword id="KW-0285">Flavoprotein</keyword>
<keyword id="KW-0521">NADP</keyword>
<keyword id="KW-0560">Oxidoreductase</keyword>
<keyword id="KW-1185">Reference proteome</keyword>
<dbReference type="EC" id="1.5.1.53" evidence="2"/>
<dbReference type="EMBL" id="AJ011686">
    <property type="protein sequence ID" value="CAA09738.1"/>
    <property type="molecule type" value="Genomic_DNA"/>
</dbReference>
<dbReference type="EMBL" id="CU329670">
    <property type="protein sequence ID" value="CAB52273.1"/>
    <property type="molecule type" value="Genomic_DNA"/>
</dbReference>
<dbReference type="EMBL" id="D89118">
    <property type="protein sequence ID" value="BAA13780.1"/>
    <property type="molecule type" value="mRNA"/>
</dbReference>
<dbReference type="PIR" id="T38659">
    <property type="entry name" value="T38659"/>
</dbReference>
<dbReference type="RefSeq" id="NP_593430.1">
    <property type="nucleotide sequence ID" value="NM_001018863.2"/>
</dbReference>
<dbReference type="SMR" id="O74927"/>
<dbReference type="BioGRID" id="279537">
    <property type="interactions" value="10"/>
</dbReference>
<dbReference type="FunCoup" id="O74927">
    <property type="interactions" value="442"/>
</dbReference>
<dbReference type="STRING" id="284812.O74927"/>
<dbReference type="iPTMnet" id="O74927"/>
<dbReference type="PaxDb" id="4896-SPAC343.10.1"/>
<dbReference type="EnsemblFungi" id="SPAC343.10.1">
    <property type="protein sequence ID" value="SPAC343.10.1:pep"/>
    <property type="gene ID" value="SPAC343.10"/>
</dbReference>
<dbReference type="GeneID" id="2543105"/>
<dbReference type="KEGG" id="spo:2543105"/>
<dbReference type="PomBase" id="SPAC343.10">
    <property type="gene designation" value="met11"/>
</dbReference>
<dbReference type="VEuPathDB" id="FungiDB:SPAC343.10"/>
<dbReference type="eggNOG" id="KOG0564">
    <property type="taxonomic scope" value="Eukaryota"/>
</dbReference>
<dbReference type="HOGENOM" id="CLU_025841_2_1_1"/>
<dbReference type="InParanoid" id="O74927"/>
<dbReference type="OMA" id="GLMPINS"/>
<dbReference type="PhylomeDB" id="O74927"/>
<dbReference type="UniPathway" id="UPA00193"/>
<dbReference type="PRO" id="PR:O74927"/>
<dbReference type="Proteomes" id="UP000002485">
    <property type="component" value="Chromosome I"/>
</dbReference>
<dbReference type="GO" id="GO:0005737">
    <property type="term" value="C:cytoplasm"/>
    <property type="evidence" value="ECO:0000266"/>
    <property type="project" value="PomBase"/>
</dbReference>
<dbReference type="GO" id="GO:0071949">
    <property type="term" value="F:FAD binding"/>
    <property type="evidence" value="ECO:0000318"/>
    <property type="project" value="GO_Central"/>
</dbReference>
<dbReference type="GO" id="GO:0004489">
    <property type="term" value="F:methylenetetrahydrofolate reductase (NAD(P)H) activity"/>
    <property type="evidence" value="ECO:0000315"/>
    <property type="project" value="PomBase"/>
</dbReference>
<dbReference type="GO" id="GO:0106313">
    <property type="term" value="F:methylenetetrahydrofolate reductase (NADPH) activity"/>
    <property type="evidence" value="ECO:0007669"/>
    <property type="project" value="RHEA"/>
</dbReference>
<dbReference type="GO" id="GO:0009086">
    <property type="term" value="P:methionine biosynthetic process"/>
    <property type="evidence" value="ECO:0000318"/>
    <property type="project" value="GO_Central"/>
</dbReference>
<dbReference type="GO" id="GO:0035999">
    <property type="term" value="P:tetrahydrofolate interconversion"/>
    <property type="evidence" value="ECO:0000269"/>
    <property type="project" value="PomBase"/>
</dbReference>
<dbReference type="CDD" id="cd00537">
    <property type="entry name" value="MTHFR"/>
    <property type="match status" value="1"/>
</dbReference>
<dbReference type="FunFam" id="3.20.20.220:FF:000002">
    <property type="entry name" value="Methylenetetrahydrofolate reductase"/>
    <property type="match status" value="1"/>
</dbReference>
<dbReference type="Gene3D" id="3.20.20.220">
    <property type="match status" value="1"/>
</dbReference>
<dbReference type="InterPro" id="IPR029041">
    <property type="entry name" value="FAD-linked_oxidoreductase-like"/>
</dbReference>
<dbReference type="InterPro" id="IPR004621">
    <property type="entry name" value="Fadh2_euk"/>
</dbReference>
<dbReference type="InterPro" id="IPR003171">
    <property type="entry name" value="Mehydrof_redctse-like"/>
</dbReference>
<dbReference type="InterPro" id="IPR053806">
    <property type="entry name" value="MTHFR_C"/>
</dbReference>
<dbReference type="NCBIfam" id="TIGR00677">
    <property type="entry name" value="fadh2_euk"/>
    <property type="match status" value="1"/>
</dbReference>
<dbReference type="PANTHER" id="PTHR45754">
    <property type="entry name" value="METHYLENETETRAHYDROFOLATE REDUCTASE"/>
    <property type="match status" value="1"/>
</dbReference>
<dbReference type="PANTHER" id="PTHR45754:SF1">
    <property type="entry name" value="METHYLENETETRAHYDROFOLATE REDUCTASE 1"/>
    <property type="match status" value="1"/>
</dbReference>
<dbReference type="Pfam" id="PF02219">
    <property type="entry name" value="MTHFR"/>
    <property type="match status" value="1"/>
</dbReference>
<dbReference type="Pfam" id="PF21895">
    <property type="entry name" value="MTHFR_C"/>
    <property type="match status" value="1"/>
</dbReference>
<dbReference type="SUPFAM" id="SSF51730">
    <property type="entry name" value="FAD-linked oxidoreductase"/>
    <property type="match status" value="1"/>
</dbReference>
<protein>
    <recommendedName>
        <fullName>Methylenetetrahydrofolate reductase 2</fullName>
        <ecNumber evidence="2">1.5.1.53</ecNumber>
    </recommendedName>
</protein>